<gene>
    <name type="primary">prfB</name>
    <name type="ordered locus">STY3197</name>
    <name type="ordered locus">t2959</name>
</gene>
<sequence length="365" mass="41149">MFEINPVNNRIQDLTERTNVLRGYLDYDAKKERLEEVNAELEQPDVWNEPERAQALGKERSSLEAIVDTLDQMTQGLDDVSGLLELAVEADDEETFNEAVAELNTLEEKLAQLEFRRMFSGEYDSADCYLDIQAGSGGTEAQDWASMLLRMYLRWAEARGFKTEVIEESEGEVAGIKSATIKISGEYAYGWLRTETGVHRLVRKSPFDSGGRRHTSFSSAFVYPEVDDDIDIDINPADLRIDVYRASGAGGQHVNRTESAVRITHIPTGIVTQCQNDRSQHKNKDQAMKQMKAKLYELEMQKKNAEKQAMEDTKSDIGWGSQIRSYVLDDSRIKDLRTGVETRNTQAVLDGSLDQFIEASLKAGL</sequence>
<reference key="1">
    <citation type="journal article" date="2001" name="Nature">
        <title>Complete genome sequence of a multiple drug resistant Salmonella enterica serovar Typhi CT18.</title>
        <authorList>
            <person name="Parkhill J."/>
            <person name="Dougan G."/>
            <person name="James K.D."/>
            <person name="Thomson N.R."/>
            <person name="Pickard D."/>
            <person name="Wain J."/>
            <person name="Churcher C.M."/>
            <person name="Mungall K.L."/>
            <person name="Bentley S.D."/>
            <person name="Holden M.T.G."/>
            <person name="Sebaihia M."/>
            <person name="Baker S."/>
            <person name="Basham D."/>
            <person name="Brooks K."/>
            <person name="Chillingworth T."/>
            <person name="Connerton P."/>
            <person name="Cronin A."/>
            <person name="Davis P."/>
            <person name="Davies R.M."/>
            <person name="Dowd L."/>
            <person name="White N."/>
            <person name="Farrar J."/>
            <person name="Feltwell T."/>
            <person name="Hamlin N."/>
            <person name="Haque A."/>
            <person name="Hien T.T."/>
            <person name="Holroyd S."/>
            <person name="Jagels K."/>
            <person name="Krogh A."/>
            <person name="Larsen T.S."/>
            <person name="Leather S."/>
            <person name="Moule S."/>
            <person name="O'Gaora P."/>
            <person name="Parry C."/>
            <person name="Quail M.A."/>
            <person name="Rutherford K.M."/>
            <person name="Simmonds M."/>
            <person name="Skelton J."/>
            <person name="Stevens K."/>
            <person name="Whitehead S."/>
            <person name="Barrell B.G."/>
        </authorList>
    </citation>
    <scope>NUCLEOTIDE SEQUENCE [LARGE SCALE GENOMIC DNA]</scope>
    <source>
        <strain>CT18</strain>
    </source>
</reference>
<reference key="2">
    <citation type="journal article" date="2003" name="J. Bacteriol.">
        <title>Comparative genomics of Salmonella enterica serovar Typhi strains Ty2 and CT18.</title>
        <authorList>
            <person name="Deng W."/>
            <person name="Liou S.-R."/>
            <person name="Plunkett G. III"/>
            <person name="Mayhew G.F."/>
            <person name="Rose D.J."/>
            <person name="Burland V."/>
            <person name="Kodoyianni V."/>
            <person name="Schwartz D.C."/>
            <person name="Blattner F.R."/>
        </authorList>
    </citation>
    <scope>NUCLEOTIDE SEQUENCE [LARGE SCALE GENOMIC DNA]</scope>
    <source>
        <strain>ATCC 700931 / Ty2</strain>
    </source>
</reference>
<comment type="function">
    <text evidence="1">Peptide chain release factor 2 directs the termination of translation in response to the peptide chain termination codons UGA and UAA.</text>
</comment>
<comment type="subcellular location">
    <subcellularLocation>
        <location evidence="1">Cytoplasm</location>
    </subcellularLocation>
</comment>
<comment type="PTM">
    <text evidence="1">Methylated by PrmC. Methylation increases the termination efficiency of RF2 (By similarity).</text>
</comment>
<comment type="miscellaneous">
    <text>The gene for this protein contains a UGA in-frame termination codon after Leu-25; a naturally occurring frameshift enables complete translation of RF-2. This provides a mechanism for the protein to regulate its own production.</text>
</comment>
<comment type="similarity">
    <text evidence="2">Belongs to the prokaryotic/mitochondrial release factor family.</text>
</comment>
<accession>P0A290</accession>
<accession>P28353</accession>
<proteinExistence type="inferred from homology"/>
<keyword id="KW-0963">Cytoplasm</keyword>
<keyword id="KW-0488">Methylation</keyword>
<keyword id="KW-0648">Protein biosynthesis</keyword>
<keyword id="KW-0688">Ribosomal frameshifting</keyword>
<protein>
    <recommendedName>
        <fullName>Peptide chain release factor 2</fullName>
        <shortName>RF-2</shortName>
    </recommendedName>
</protein>
<name>RF2_SALTI</name>
<evidence type="ECO:0000250" key="1"/>
<evidence type="ECO:0000305" key="2"/>
<organism>
    <name type="scientific">Salmonella typhi</name>
    <dbReference type="NCBI Taxonomy" id="90370"/>
    <lineage>
        <taxon>Bacteria</taxon>
        <taxon>Pseudomonadati</taxon>
        <taxon>Pseudomonadota</taxon>
        <taxon>Gammaproteobacteria</taxon>
        <taxon>Enterobacterales</taxon>
        <taxon>Enterobacteriaceae</taxon>
        <taxon>Salmonella</taxon>
    </lineage>
</organism>
<feature type="chain" id="PRO_0000166842" description="Peptide chain release factor 2">
    <location>
        <begin position="1"/>
        <end position="365"/>
    </location>
</feature>
<feature type="modified residue" description="N5-methylglutamine" evidence="1">
    <location>
        <position position="252"/>
    </location>
</feature>
<dbReference type="EMBL" id="AL513382">
    <property type="protein sequence ID" value="CAD02871.1"/>
    <property type="molecule type" value="Genomic_DNA"/>
</dbReference>
<dbReference type="EMBL" id="AE014613">
    <property type="protein sequence ID" value="AAO70511.1"/>
    <property type="molecule type" value="Genomic_DNA"/>
</dbReference>
<dbReference type="RefSeq" id="NP_457439.1">
    <property type="nucleotide sequence ID" value="NC_003198.1"/>
</dbReference>
<dbReference type="SMR" id="P0A290"/>
<dbReference type="STRING" id="220341.gene:17587072"/>
<dbReference type="KEGG" id="stt:t2959"/>
<dbReference type="KEGG" id="sty:STY3197"/>
<dbReference type="PATRIC" id="fig|220341.7.peg.3255"/>
<dbReference type="eggNOG" id="COG1186">
    <property type="taxonomic scope" value="Bacteria"/>
</dbReference>
<dbReference type="HOGENOM" id="CLU_220733_1_0_6"/>
<dbReference type="OMA" id="YVFHPYQ"/>
<dbReference type="OrthoDB" id="9806673at2"/>
<dbReference type="Proteomes" id="UP000000541">
    <property type="component" value="Chromosome"/>
</dbReference>
<dbReference type="Proteomes" id="UP000002670">
    <property type="component" value="Chromosome"/>
</dbReference>
<dbReference type="GO" id="GO:0005737">
    <property type="term" value="C:cytoplasm"/>
    <property type="evidence" value="ECO:0007669"/>
    <property type="project" value="UniProtKB-SubCell"/>
</dbReference>
<dbReference type="GO" id="GO:0016149">
    <property type="term" value="F:translation release factor activity, codon specific"/>
    <property type="evidence" value="ECO:0007669"/>
    <property type="project" value="UniProtKB-UniRule"/>
</dbReference>
<dbReference type="GO" id="GO:0075523">
    <property type="term" value="P:viral translational frameshifting"/>
    <property type="evidence" value="ECO:0007669"/>
    <property type="project" value="UniProtKB-KW"/>
</dbReference>
<dbReference type="FunFam" id="1.20.58.410:FF:000001">
    <property type="entry name" value="Peptide chain release factor 2"/>
    <property type="match status" value="1"/>
</dbReference>
<dbReference type="FunFam" id="3.30.160.20:FF:000010">
    <property type="entry name" value="Peptide chain release factor 2"/>
    <property type="match status" value="1"/>
</dbReference>
<dbReference type="Gene3D" id="3.30.160.20">
    <property type="match status" value="1"/>
</dbReference>
<dbReference type="Gene3D" id="3.30.70.1660">
    <property type="match status" value="1"/>
</dbReference>
<dbReference type="Gene3D" id="1.20.58.410">
    <property type="entry name" value="Release factor"/>
    <property type="match status" value="1"/>
</dbReference>
<dbReference type="HAMAP" id="MF_00094">
    <property type="entry name" value="Rel_fac_2"/>
    <property type="match status" value="1"/>
</dbReference>
<dbReference type="InterPro" id="IPR005139">
    <property type="entry name" value="PCRF"/>
</dbReference>
<dbReference type="InterPro" id="IPR000352">
    <property type="entry name" value="Pep_chain_release_fac_I"/>
</dbReference>
<dbReference type="InterPro" id="IPR045853">
    <property type="entry name" value="Pep_chain_release_fac_I_sf"/>
</dbReference>
<dbReference type="InterPro" id="IPR004374">
    <property type="entry name" value="PrfB"/>
</dbReference>
<dbReference type="NCBIfam" id="TIGR00020">
    <property type="entry name" value="prfB"/>
    <property type="match status" value="1"/>
</dbReference>
<dbReference type="PANTHER" id="PTHR43116:SF3">
    <property type="entry name" value="CLASS I PEPTIDE CHAIN RELEASE FACTOR"/>
    <property type="match status" value="1"/>
</dbReference>
<dbReference type="PANTHER" id="PTHR43116">
    <property type="entry name" value="PEPTIDE CHAIN RELEASE FACTOR 2"/>
    <property type="match status" value="1"/>
</dbReference>
<dbReference type="Pfam" id="PF03462">
    <property type="entry name" value="PCRF"/>
    <property type="match status" value="1"/>
</dbReference>
<dbReference type="Pfam" id="PF00472">
    <property type="entry name" value="RF-1"/>
    <property type="match status" value="1"/>
</dbReference>
<dbReference type="SMART" id="SM00937">
    <property type="entry name" value="PCRF"/>
    <property type="match status" value="1"/>
</dbReference>
<dbReference type="SUPFAM" id="SSF75620">
    <property type="entry name" value="Release factor"/>
    <property type="match status" value="1"/>
</dbReference>
<dbReference type="PROSITE" id="PS00745">
    <property type="entry name" value="RF_PROK_I"/>
    <property type="match status" value="1"/>
</dbReference>